<proteinExistence type="evidence at transcript level"/>
<name>RP44A_ARATH</name>
<dbReference type="EC" id="3.1.13.-"/>
<dbReference type="EC" id="3.1.26.-"/>
<dbReference type="EMBL" id="AC007584">
    <property type="protein sequence ID" value="AAD32908.2"/>
    <property type="molecule type" value="Genomic_DNA"/>
</dbReference>
<dbReference type="EMBL" id="CP002685">
    <property type="protein sequence ID" value="AEC06638.1"/>
    <property type="molecule type" value="Genomic_DNA"/>
</dbReference>
<dbReference type="EMBL" id="AY057479">
    <property type="protein sequence ID" value="AAL09713.1"/>
    <property type="molecule type" value="mRNA"/>
</dbReference>
<dbReference type="EMBL" id="AY090298">
    <property type="protein sequence ID" value="AAL90959.1"/>
    <property type="molecule type" value="mRNA"/>
</dbReference>
<dbReference type="PIR" id="A84553">
    <property type="entry name" value="A84553"/>
</dbReference>
<dbReference type="RefSeq" id="NP_565418.1">
    <molecule id="Q9SHL7-1"/>
    <property type="nucleotide sequence ID" value="NM_127305.3"/>
</dbReference>
<dbReference type="SMR" id="Q9SHL7"/>
<dbReference type="FunCoup" id="Q9SHL7">
    <property type="interactions" value="4225"/>
</dbReference>
<dbReference type="STRING" id="3702.Q9SHL7"/>
<dbReference type="iPTMnet" id="Q9SHL7"/>
<dbReference type="PaxDb" id="3702-AT2G17510.2"/>
<dbReference type="ProteomicsDB" id="228229">
    <molecule id="Q9SHL7-1"/>
</dbReference>
<dbReference type="EnsemblPlants" id="AT2G17510.1">
    <molecule id="Q9SHL7-1"/>
    <property type="protein sequence ID" value="AT2G17510.1"/>
    <property type="gene ID" value="AT2G17510"/>
</dbReference>
<dbReference type="GeneID" id="816257"/>
<dbReference type="Gramene" id="AT2G17510.1">
    <molecule id="Q9SHL7-1"/>
    <property type="protein sequence ID" value="AT2G17510.1"/>
    <property type="gene ID" value="AT2G17510"/>
</dbReference>
<dbReference type="KEGG" id="ath:AT2G17510"/>
<dbReference type="Araport" id="AT2G17510"/>
<dbReference type="TAIR" id="AT2G17510">
    <property type="gene designation" value="EMB2763"/>
</dbReference>
<dbReference type="eggNOG" id="KOG2102">
    <property type="taxonomic scope" value="Eukaryota"/>
</dbReference>
<dbReference type="HOGENOM" id="CLU_002333_5_0_1"/>
<dbReference type="InParanoid" id="Q9SHL7"/>
<dbReference type="OMA" id="GQVMRNN"/>
<dbReference type="PhylomeDB" id="Q9SHL7"/>
<dbReference type="CD-CODE" id="4299E36E">
    <property type="entry name" value="Nucleolus"/>
</dbReference>
<dbReference type="PRO" id="PR:Q9SHL7"/>
<dbReference type="Proteomes" id="UP000006548">
    <property type="component" value="Chromosome 2"/>
</dbReference>
<dbReference type="ExpressionAtlas" id="Q9SHL7">
    <property type="expression patterns" value="baseline and differential"/>
</dbReference>
<dbReference type="GO" id="GO:0000178">
    <property type="term" value="C:exosome (RNase complex)"/>
    <property type="evidence" value="ECO:0007669"/>
    <property type="project" value="UniProtKB-KW"/>
</dbReference>
<dbReference type="GO" id="GO:0005634">
    <property type="term" value="C:nucleus"/>
    <property type="evidence" value="ECO:0007669"/>
    <property type="project" value="UniProtKB-SubCell"/>
</dbReference>
<dbReference type="GO" id="GO:0004519">
    <property type="term" value="F:endonuclease activity"/>
    <property type="evidence" value="ECO:0007669"/>
    <property type="project" value="UniProtKB-KW"/>
</dbReference>
<dbReference type="GO" id="GO:0004527">
    <property type="term" value="F:exonuclease activity"/>
    <property type="evidence" value="ECO:0007669"/>
    <property type="project" value="UniProtKB-KW"/>
</dbReference>
<dbReference type="GO" id="GO:0046872">
    <property type="term" value="F:metal ion binding"/>
    <property type="evidence" value="ECO:0007669"/>
    <property type="project" value="UniProtKB-KW"/>
</dbReference>
<dbReference type="GO" id="GO:0003723">
    <property type="term" value="F:RNA binding"/>
    <property type="evidence" value="ECO:0007669"/>
    <property type="project" value="UniProtKB-KW"/>
</dbReference>
<dbReference type="GO" id="GO:0004540">
    <property type="term" value="F:RNA nuclease activity"/>
    <property type="evidence" value="ECO:0007669"/>
    <property type="project" value="InterPro"/>
</dbReference>
<dbReference type="GO" id="GO:0006364">
    <property type="term" value="P:rRNA processing"/>
    <property type="evidence" value="ECO:0007669"/>
    <property type="project" value="UniProtKB-KW"/>
</dbReference>
<dbReference type="CDD" id="cd09862">
    <property type="entry name" value="PIN_Rrp44-like"/>
    <property type="match status" value="1"/>
</dbReference>
<dbReference type="FunFam" id="3.40.50.1010:FF:000038">
    <property type="entry name" value="Exosome complex exonuclease RRP44"/>
    <property type="match status" value="1"/>
</dbReference>
<dbReference type="FunFam" id="2.40.50.140:FF:000193">
    <property type="entry name" value="Exosome complex exonuclease RRP44 homolog A"/>
    <property type="match status" value="1"/>
</dbReference>
<dbReference type="FunFam" id="2.40.50.690:FF:000006">
    <property type="entry name" value="Exosome complex exonuclease RRP44 homolog A"/>
    <property type="match status" value="1"/>
</dbReference>
<dbReference type="FunFam" id="2.40.50.700:FF:000004">
    <property type="entry name" value="Exosome complex exonuclease RRP44 homolog A"/>
    <property type="match status" value="1"/>
</dbReference>
<dbReference type="Gene3D" id="2.40.50.690">
    <property type="match status" value="1"/>
</dbReference>
<dbReference type="Gene3D" id="2.40.50.700">
    <property type="match status" value="1"/>
</dbReference>
<dbReference type="Gene3D" id="3.40.50.1010">
    <property type="entry name" value="5'-nuclease"/>
    <property type="match status" value="1"/>
</dbReference>
<dbReference type="Gene3D" id="2.40.50.140">
    <property type="entry name" value="Nucleic acid-binding proteins"/>
    <property type="match status" value="1"/>
</dbReference>
<dbReference type="InterPro" id="IPR041505">
    <property type="entry name" value="Dis3_CSD2"/>
</dbReference>
<dbReference type="InterPro" id="IPR012340">
    <property type="entry name" value="NA-bd_OB-fold"/>
</dbReference>
<dbReference type="InterPro" id="IPR029060">
    <property type="entry name" value="PIN-like_dom_sf"/>
</dbReference>
<dbReference type="InterPro" id="IPR002716">
    <property type="entry name" value="PIN_dom"/>
</dbReference>
<dbReference type="InterPro" id="IPR001900">
    <property type="entry name" value="RNase_II/R"/>
</dbReference>
<dbReference type="InterPro" id="IPR022966">
    <property type="entry name" value="RNase_II/R_CS"/>
</dbReference>
<dbReference type="InterPro" id="IPR050180">
    <property type="entry name" value="RNR_Ribonuclease"/>
</dbReference>
<dbReference type="InterPro" id="IPR033771">
    <property type="entry name" value="Rrp44_CSD1"/>
</dbReference>
<dbReference type="InterPro" id="IPR033770">
    <property type="entry name" value="RRP44_S1"/>
</dbReference>
<dbReference type="PANTHER" id="PTHR23355:SF35">
    <property type="entry name" value="EXOSOME COMPLEX EXONUCLEASE RRP44"/>
    <property type="match status" value="1"/>
</dbReference>
<dbReference type="PANTHER" id="PTHR23355">
    <property type="entry name" value="RIBONUCLEASE"/>
    <property type="match status" value="1"/>
</dbReference>
<dbReference type="Pfam" id="PF17849">
    <property type="entry name" value="OB_Dis3"/>
    <property type="match status" value="1"/>
</dbReference>
<dbReference type="Pfam" id="PF13638">
    <property type="entry name" value="PIN_4"/>
    <property type="match status" value="1"/>
</dbReference>
<dbReference type="Pfam" id="PF00773">
    <property type="entry name" value="RNB"/>
    <property type="match status" value="1"/>
</dbReference>
<dbReference type="Pfam" id="PF17216">
    <property type="entry name" value="Rrp44_CSD1"/>
    <property type="match status" value="1"/>
</dbReference>
<dbReference type="Pfam" id="PF17215">
    <property type="entry name" value="Rrp44_S1"/>
    <property type="match status" value="1"/>
</dbReference>
<dbReference type="SMART" id="SM00670">
    <property type="entry name" value="PINc"/>
    <property type="match status" value="1"/>
</dbReference>
<dbReference type="SMART" id="SM00955">
    <property type="entry name" value="RNB"/>
    <property type="match status" value="1"/>
</dbReference>
<dbReference type="SUPFAM" id="SSF50249">
    <property type="entry name" value="Nucleic acid-binding proteins"/>
    <property type="match status" value="3"/>
</dbReference>
<dbReference type="SUPFAM" id="SSF88723">
    <property type="entry name" value="PIN domain-like"/>
    <property type="match status" value="1"/>
</dbReference>
<dbReference type="PROSITE" id="PS01175">
    <property type="entry name" value="RIBONUCLEASE_II"/>
    <property type="match status" value="1"/>
</dbReference>
<reference key="1">
    <citation type="journal article" date="1999" name="Nature">
        <title>Sequence and analysis of chromosome 2 of the plant Arabidopsis thaliana.</title>
        <authorList>
            <person name="Lin X."/>
            <person name="Kaul S."/>
            <person name="Rounsley S.D."/>
            <person name="Shea T.P."/>
            <person name="Benito M.-I."/>
            <person name="Town C.D."/>
            <person name="Fujii C.Y."/>
            <person name="Mason T.M."/>
            <person name="Bowman C.L."/>
            <person name="Barnstead M.E."/>
            <person name="Feldblyum T.V."/>
            <person name="Buell C.R."/>
            <person name="Ketchum K.A."/>
            <person name="Lee J.J."/>
            <person name="Ronning C.M."/>
            <person name="Koo H.L."/>
            <person name="Moffat K.S."/>
            <person name="Cronin L.A."/>
            <person name="Shen M."/>
            <person name="Pai G."/>
            <person name="Van Aken S."/>
            <person name="Umayam L."/>
            <person name="Tallon L.J."/>
            <person name="Gill J.E."/>
            <person name="Adams M.D."/>
            <person name="Carrera A.J."/>
            <person name="Creasy T.H."/>
            <person name="Goodman H.M."/>
            <person name="Somerville C.R."/>
            <person name="Copenhaver G.P."/>
            <person name="Preuss D."/>
            <person name="Nierman W.C."/>
            <person name="White O."/>
            <person name="Eisen J.A."/>
            <person name="Salzberg S.L."/>
            <person name="Fraser C.M."/>
            <person name="Venter J.C."/>
        </authorList>
    </citation>
    <scope>NUCLEOTIDE SEQUENCE [LARGE SCALE GENOMIC DNA]</scope>
    <source>
        <strain>cv. Columbia</strain>
    </source>
</reference>
<reference key="2">
    <citation type="journal article" date="2017" name="Plant J.">
        <title>Araport11: a complete reannotation of the Arabidopsis thaliana reference genome.</title>
        <authorList>
            <person name="Cheng C.Y."/>
            <person name="Krishnakumar V."/>
            <person name="Chan A.P."/>
            <person name="Thibaud-Nissen F."/>
            <person name="Schobel S."/>
            <person name="Town C.D."/>
        </authorList>
    </citation>
    <scope>GENOME REANNOTATION</scope>
    <source>
        <strain>cv. Columbia</strain>
    </source>
</reference>
<reference key="3">
    <citation type="journal article" date="2003" name="Science">
        <title>Empirical analysis of transcriptional activity in the Arabidopsis genome.</title>
        <authorList>
            <person name="Yamada K."/>
            <person name="Lim J."/>
            <person name="Dale J.M."/>
            <person name="Chen H."/>
            <person name="Shinn P."/>
            <person name="Palm C.J."/>
            <person name="Southwick A.M."/>
            <person name="Wu H.C."/>
            <person name="Kim C.J."/>
            <person name="Nguyen M."/>
            <person name="Pham P.K."/>
            <person name="Cheuk R.F."/>
            <person name="Karlin-Newmann G."/>
            <person name="Liu S.X."/>
            <person name="Lam B."/>
            <person name="Sakano H."/>
            <person name="Wu T."/>
            <person name="Yu G."/>
            <person name="Miranda M."/>
            <person name="Quach H.L."/>
            <person name="Tripp M."/>
            <person name="Chang C.H."/>
            <person name="Lee J.M."/>
            <person name="Toriumi M.J."/>
            <person name="Chan M.M."/>
            <person name="Tang C.C."/>
            <person name="Onodera C.S."/>
            <person name="Deng J.M."/>
            <person name="Akiyama K."/>
            <person name="Ansari Y."/>
            <person name="Arakawa T."/>
            <person name="Banh J."/>
            <person name="Banno F."/>
            <person name="Bowser L."/>
            <person name="Brooks S.Y."/>
            <person name="Carninci P."/>
            <person name="Chao Q."/>
            <person name="Choy N."/>
            <person name="Enju A."/>
            <person name="Goldsmith A.D."/>
            <person name="Gurjal M."/>
            <person name="Hansen N.F."/>
            <person name="Hayashizaki Y."/>
            <person name="Johnson-Hopson C."/>
            <person name="Hsuan V.W."/>
            <person name="Iida K."/>
            <person name="Karnes M."/>
            <person name="Khan S."/>
            <person name="Koesema E."/>
            <person name="Ishida J."/>
            <person name="Jiang P.X."/>
            <person name="Jones T."/>
            <person name="Kawai J."/>
            <person name="Kamiya A."/>
            <person name="Meyers C."/>
            <person name="Nakajima M."/>
            <person name="Narusaka M."/>
            <person name="Seki M."/>
            <person name="Sakurai T."/>
            <person name="Satou M."/>
            <person name="Tamse R."/>
            <person name="Vaysberg M."/>
            <person name="Wallender E.K."/>
            <person name="Wong C."/>
            <person name="Yamamura Y."/>
            <person name="Yuan S."/>
            <person name="Shinozaki K."/>
            <person name="Davis R.W."/>
            <person name="Theologis A."/>
            <person name="Ecker J.R."/>
        </authorList>
    </citation>
    <scope>NUCLEOTIDE SEQUENCE [LARGE SCALE MRNA]</scope>
    <source>
        <strain>cv. Columbia</strain>
    </source>
</reference>
<reference key="4">
    <citation type="journal article" date="2010" name="Proc. Natl. Acad. Sci. U.S.A.">
        <title>Conserved RNaseII domain protein functions in cytoplasmic mRNA decay and suppresses Arabidopsis decapping mutant phenotypes.</title>
        <authorList>
            <person name="Zhang W."/>
            <person name="Murphy C."/>
            <person name="Sieburth L.E."/>
        </authorList>
    </citation>
    <scope>FUNCTION</scope>
    <scope>SUBCELLULAR LOCATION</scope>
    <scope>DISRUPTION PHENOTYPE</scope>
</reference>
<reference key="5">
    <citation type="journal article" date="2013" name="PLoS ONE">
        <title>Arabidopsis AtRRP44A is the functional homolog of Rrp44/Dis3, an exosome component, is essential for viability and is required for RNA processing and degradation.</title>
        <authorList>
            <person name="Kumakura N."/>
            <person name="Otsuki H."/>
            <person name="Tsuzuki M."/>
            <person name="Takeda A."/>
            <person name="Watanabe Y."/>
        </authorList>
    </citation>
    <scope>FUNCTION</scope>
    <scope>DISRUPTION PHENOTYPE</scope>
</reference>
<evidence type="ECO:0000250" key="1">
    <source>
        <dbReference type="UniProtKB" id="Q08162"/>
    </source>
</evidence>
<evidence type="ECO:0000255" key="2"/>
<evidence type="ECO:0000256" key="3">
    <source>
        <dbReference type="SAM" id="MobiDB-lite"/>
    </source>
</evidence>
<evidence type="ECO:0000269" key="4">
    <source>
    </source>
</evidence>
<evidence type="ECO:0000269" key="5">
    <source>
    </source>
</evidence>
<evidence type="ECO:0000303" key="6">
    <source>
    </source>
</evidence>
<evidence type="ECO:0000305" key="7"/>
<evidence type="ECO:0000312" key="8">
    <source>
        <dbReference type="Araport" id="AT2G17510"/>
    </source>
</evidence>
<evidence type="ECO:0000312" key="9">
    <source>
        <dbReference type="EMBL" id="AEC06638.1"/>
    </source>
</evidence>
<sequence length="933" mass="104996">MLQSKVFNKKTRGGRIQKQVREVYLRDDIYCGAFSCKSCDSSAARLSSSKIIVVDTNVVLHQIDLLENKAIDTVVVLSVVLDEVKNRNRSVYNRIRLLCSNPARQFYVFSNHVHKDTYVQAMEKESANDHNDRAIRVATLWYQKHLGDTSQVLLVTNDRENKRKATEEGISAETIEAYVKSLGQPELLDLLAQPTNEDITMEDADDSRPSKRKLIYQEHKPMSEITAGLHRGIYHQGKLRVNRFNPYEAYVGSESIGEEIIIYGRSNMNRAFDGDIVAVELLPRDQWQDEKALSIAEEDDEEDDTVHLAPDNVDDAPRTSNLSHETSGDKNAAPVRPSGRVVGVIRRNWHSYCGSLEPMSLPAGSGGTAHALFVSKDRRIPKIRINTRQLQNLLDMRIVVAVDSWDRQSRYPSGHYVRPIGKIGDKETETEVVLIENDVDYSPFSSQVLACLPPLPWSVSSEDVSNPVRQDLRHLLVFSVDPPGCKDIDDALHCTSLPNGNFELGVHIADVTNFVHPGTPLDDEASKRGTSVYLVERRIDMLPKPLTEDICSLRADVERLAFSVIWEMSPDAEIISTRFTKSIIKSSAALSYIEAQARMDDSRLTDSLTTDLRNMNTLAKIMRQRRIDRGALTLASAEVKFDIDPENHDPLNIGMYQILEANQMVEEFMLAANVSVAGQILKLFPSCSLLRRHPTPTREMLEPLLRTAAAIGLTLDVSSSKALADSLDRAVGEDPYFNKLIRILATRCMTQAVYFCSGDLSPPEYHHYGLAAPLYTHFTSPIRRYADVFVHRLLAASLGIYKLPTVFQDRPQLTSVADNLNYRHRNAQMAGRASVELYVLIYFRTRPTDEEARVVKIRSNGFIVFVPKYGIEGPVYLTGKGEKGAGDWYVDEEKQKIVKMDGSLSYSVLQTVKIHMEVVEPQPNRPKLQLTLL</sequence>
<feature type="chain" id="PRO_0000435321" description="Exosome complex exonuclease RRP44 homolog A">
    <location>
        <begin position="1"/>
        <end position="933"/>
    </location>
</feature>
<feature type="domain" description="PINc" evidence="2">
    <location>
        <begin position="50"/>
        <end position="163"/>
    </location>
</feature>
<feature type="domain" description="CSD1" evidence="2">
    <location>
        <begin position="217"/>
        <end position="321"/>
    </location>
</feature>
<feature type="domain" description="CSD2" evidence="2">
    <location>
        <begin position="371"/>
        <end position="438"/>
    </location>
</feature>
<feature type="domain" description="RNB" evidence="2">
    <location>
        <begin position="469"/>
        <end position="798"/>
    </location>
</feature>
<feature type="region of interest" description="Disordered" evidence="3">
    <location>
        <begin position="296"/>
        <end position="336"/>
    </location>
</feature>
<feature type="binding site" evidence="1">
    <location>
        <position position="481"/>
    </location>
    <ligand>
        <name>Mg(2+)</name>
        <dbReference type="ChEBI" id="CHEBI:18420"/>
    </ligand>
</feature>
<feature type="binding site" evidence="1">
    <location>
        <position position="490"/>
    </location>
    <ligand>
        <name>Mg(2+)</name>
        <dbReference type="ChEBI" id="CHEBI:18420"/>
    </ligand>
</feature>
<protein>
    <recommendedName>
        <fullName evidence="7">Exosome complex exonuclease RRP44 homolog A</fullName>
        <shortName evidence="7">RRP44 homolog A</shortName>
        <ecNumber>3.1.13.-</ecNumber>
        <ecNumber>3.1.26.-</ecNumber>
    </recommendedName>
    <alternativeName>
        <fullName evidence="7">Protein EMBRYO DEFECTIVE 2763</fullName>
    </alternativeName>
    <alternativeName>
        <fullName evidence="7">Ribosomal RNA-processing protein 44A</fullName>
        <shortName evidence="6">AtRRP44A</shortName>
    </alternativeName>
</protein>
<comment type="function">
    <text evidence="4 5">Catalytic component of the RNA exosome complex which has 3'-&gt;5' exoribonuclease activity and participates in a multitude of cellular RNA processing and degradation events. Required for 5.8S rRNA intermediate processing and the degradation of 5' external transcribed spacer (5' ETS), a maturation by-product of rRNA synthesis. Is not involved in the degradation of turnip crinkle virus (TCV) RNA and significant virus resistance (PubMed:24244451). Required for normal development of female gametophytes and early embryogenesis (PubMed:20798041, PubMed:24244451).</text>
</comment>
<comment type="cofactor">
    <cofactor evidence="1">
        <name>Mg(2+)</name>
        <dbReference type="ChEBI" id="CHEBI:18420"/>
    </cofactor>
</comment>
<comment type="subunit">
    <text evidence="1">Probable component of the RNA exosome complex.</text>
</comment>
<comment type="subcellular location">
    <subcellularLocation>
        <location evidence="4">Nucleus</location>
    </subcellularLocation>
</comment>
<comment type="alternative products">
    <event type="alternative splicing"/>
    <isoform>
        <id>Q9SHL7-1</id>
        <name>1</name>
        <sequence type="displayed"/>
    </isoform>
    <text evidence="7">A number of isoforms are produced. According to EST sequences.</text>
</comment>
<comment type="disruption phenotype">
    <text evidence="4 5">Aborted development of female gametophytes.</text>
</comment>
<comment type="similarity">
    <text evidence="7">Belongs to the RNR ribonuclease family.</text>
</comment>
<keyword id="KW-0025">Alternative splicing</keyword>
<keyword id="KW-0255">Endonuclease</keyword>
<keyword id="KW-0269">Exonuclease</keyword>
<keyword id="KW-0271">Exosome</keyword>
<keyword id="KW-0378">Hydrolase</keyword>
<keyword id="KW-0460">Magnesium</keyword>
<keyword id="KW-0479">Metal-binding</keyword>
<keyword id="KW-0540">Nuclease</keyword>
<keyword id="KW-0539">Nucleus</keyword>
<keyword id="KW-1185">Reference proteome</keyword>
<keyword id="KW-0694">RNA-binding</keyword>
<keyword id="KW-0698">rRNA processing</keyword>
<organism>
    <name type="scientific">Arabidopsis thaliana</name>
    <name type="common">Mouse-ear cress</name>
    <dbReference type="NCBI Taxonomy" id="3702"/>
    <lineage>
        <taxon>Eukaryota</taxon>
        <taxon>Viridiplantae</taxon>
        <taxon>Streptophyta</taxon>
        <taxon>Embryophyta</taxon>
        <taxon>Tracheophyta</taxon>
        <taxon>Spermatophyta</taxon>
        <taxon>Magnoliopsida</taxon>
        <taxon>eudicotyledons</taxon>
        <taxon>Gunneridae</taxon>
        <taxon>Pentapetalae</taxon>
        <taxon>rosids</taxon>
        <taxon>malvids</taxon>
        <taxon>Brassicales</taxon>
        <taxon>Brassicaceae</taxon>
        <taxon>Camelineae</taxon>
        <taxon>Arabidopsis</taxon>
    </lineage>
</organism>
<gene>
    <name evidence="6" type="primary">RRP44A</name>
    <name evidence="9" type="synonym">EMB2763</name>
    <name evidence="8" type="ordered locus">At2g17510</name>
</gene>
<accession>Q9SHL7</accession>
<accession>Q93ZK2</accession>